<proteinExistence type="inferred from homology"/>
<evidence type="ECO:0000255" key="1">
    <source>
        <dbReference type="HAMAP-Rule" id="MF_00122"/>
    </source>
</evidence>
<accession>Q8CRU2</accession>
<name>GATC_STAES</name>
<protein>
    <recommendedName>
        <fullName evidence="1">Aspartyl/glutamyl-tRNA(Asn/Gln) amidotransferase subunit C</fullName>
        <shortName evidence="1">Asp/Glu-ADT subunit C</shortName>
        <ecNumber evidence="1">6.3.5.-</ecNumber>
    </recommendedName>
</protein>
<organism>
    <name type="scientific">Staphylococcus epidermidis (strain ATCC 12228 / FDA PCI 1200)</name>
    <dbReference type="NCBI Taxonomy" id="176280"/>
    <lineage>
        <taxon>Bacteria</taxon>
        <taxon>Bacillati</taxon>
        <taxon>Bacillota</taxon>
        <taxon>Bacilli</taxon>
        <taxon>Bacillales</taxon>
        <taxon>Staphylococcaceae</taxon>
        <taxon>Staphylococcus</taxon>
    </lineage>
</organism>
<sequence length="100" mass="11182">MTKVTREEVEHIANLARLQISPEETEEMANTLESILDFAKQNDSADTEGIEPTYHVLDLQNVLRDDKAIEGIPQELALKNAKETEDGQFKVPSIMNGEDA</sequence>
<reference key="1">
    <citation type="journal article" date="2003" name="Mol. Microbiol.">
        <title>Genome-based analysis of virulence genes in a non-biofilm-forming Staphylococcus epidermidis strain (ATCC 12228).</title>
        <authorList>
            <person name="Zhang Y.-Q."/>
            <person name="Ren S.-X."/>
            <person name="Li H.-L."/>
            <person name="Wang Y.-X."/>
            <person name="Fu G."/>
            <person name="Yang J."/>
            <person name="Qin Z.-Q."/>
            <person name="Miao Y.-G."/>
            <person name="Wang W.-Y."/>
            <person name="Chen R.-S."/>
            <person name="Shen Y."/>
            <person name="Chen Z."/>
            <person name="Yuan Z.-H."/>
            <person name="Zhao G.-P."/>
            <person name="Qu D."/>
            <person name="Danchin A."/>
            <person name="Wen Y.-M."/>
        </authorList>
    </citation>
    <scope>NUCLEOTIDE SEQUENCE [LARGE SCALE GENOMIC DNA]</scope>
    <source>
        <strain>ATCC 12228 / FDA PCI 1200</strain>
    </source>
</reference>
<keyword id="KW-0067">ATP-binding</keyword>
<keyword id="KW-0436">Ligase</keyword>
<keyword id="KW-0547">Nucleotide-binding</keyword>
<keyword id="KW-0648">Protein biosynthesis</keyword>
<comment type="function">
    <text evidence="1">Allows the formation of correctly charged Asn-tRNA(Asn) or Gln-tRNA(Gln) through the transamidation of misacylated Asp-tRNA(Asn) or Glu-tRNA(Gln) in organisms which lack either or both of asparaginyl-tRNA or glutaminyl-tRNA synthetases. The reaction takes place in the presence of glutamine and ATP through an activated phospho-Asp-tRNA(Asn) or phospho-Glu-tRNA(Gln).</text>
</comment>
<comment type="catalytic activity">
    <reaction evidence="1">
        <text>L-glutamyl-tRNA(Gln) + L-glutamine + ATP + H2O = L-glutaminyl-tRNA(Gln) + L-glutamate + ADP + phosphate + H(+)</text>
        <dbReference type="Rhea" id="RHEA:17521"/>
        <dbReference type="Rhea" id="RHEA-COMP:9681"/>
        <dbReference type="Rhea" id="RHEA-COMP:9684"/>
        <dbReference type="ChEBI" id="CHEBI:15377"/>
        <dbReference type="ChEBI" id="CHEBI:15378"/>
        <dbReference type="ChEBI" id="CHEBI:29985"/>
        <dbReference type="ChEBI" id="CHEBI:30616"/>
        <dbReference type="ChEBI" id="CHEBI:43474"/>
        <dbReference type="ChEBI" id="CHEBI:58359"/>
        <dbReference type="ChEBI" id="CHEBI:78520"/>
        <dbReference type="ChEBI" id="CHEBI:78521"/>
        <dbReference type="ChEBI" id="CHEBI:456216"/>
    </reaction>
</comment>
<comment type="catalytic activity">
    <reaction evidence="1">
        <text>L-aspartyl-tRNA(Asn) + L-glutamine + ATP + H2O = L-asparaginyl-tRNA(Asn) + L-glutamate + ADP + phosphate + 2 H(+)</text>
        <dbReference type="Rhea" id="RHEA:14513"/>
        <dbReference type="Rhea" id="RHEA-COMP:9674"/>
        <dbReference type="Rhea" id="RHEA-COMP:9677"/>
        <dbReference type="ChEBI" id="CHEBI:15377"/>
        <dbReference type="ChEBI" id="CHEBI:15378"/>
        <dbReference type="ChEBI" id="CHEBI:29985"/>
        <dbReference type="ChEBI" id="CHEBI:30616"/>
        <dbReference type="ChEBI" id="CHEBI:43474"/>
        <dbReference type="ChEBI" id="CHEBI:58359"/>
        <dbReference type="ChEBI" id="CHEBI:78515"/>
        <dbReference type="ChEBI" id="CHEBI:78516"/>
        <dbReference type="ChEBI" id="CHEBI:456216"/>
    </reaction>
</comment>
<comment type="subunit">
    <text evidence="1">Heterotrimer of A, B and C subunits.</text>
</comment>
<comment type="similarity">
    <text evidence="1">Belongs to the GatC family.</text>
</comment>
<feature type="chain" id="PRO_0000105336" description="Aspartyl/glutamyl-tRNA(Asn/Gln) amidotransferase subunit C">
    <location>
        <begin position="1"/>
        <end position="100"/>
    </location>
</feature>
<dbReference type="EC" id="6.3.5.-" evidence="1"/>
<dbReference type="EMBL" id="AE015929">
    <property type="protein sequence ID" value="AAO05185.1"/>
    <property type="molecule type" value="Genomic_DNA"/>
</dbReference>
<dbReference type="RefSeq" id="NP_765141.1">
    <property type="nucleotide sequence ID" value="NC_004461.1"/>
</dbReference>
<dbReference type="RefSeq" id="WP_002457086.1">
    <property type="nucleotide sequence ID" value="NZ_WBME01000010.1"/>
</dbReference>
<dbReference type="SMR" id="Q8CRU2"/>
<dbReference type="GeneID" id="50018314"/>
<dbReference type="KEGG" id="sep:SE_1586"/>
<dbReference type="PATRIC" id="fig|176280.10.peg.1550"/>
<dbReference type="eggNOG" id="COG0721">
    <property type="taxonomic scope" value="Bacteria"/>
</dbReference>
<dbReference type="HOGENOM" id="CLU_105899_1_2_9"/>
<dbReference type="OrthoDB" id="9813938at2"/>
<dbReference type="Proteomes" id="UP000001411">
    <property type="component" value="Chromosome"/>
</dbReference>
<dbReference type="GO" id="GO:0050566">
    <property type="term" value="F:asparaginyl-tRNA synthase (glutamine-hydrolyzing) activity"/>
    <property type="evidence" value="ECO:0007669"/>
    <property type="project" value="RHEA"/>
</dbReference>
<dbReference type="GO" id="GO:0005524">
    <property type="term" value="F:ATP binding"/>
    <property type="evidence" value="ECO:0007669"/>
    <property type="project" value="UniProtKB-KW"/>
</dbReference>
<dbReference type="GO" id="GO:0050567">
    <property type="term" value="F:glutaminyl-tRNA synthase (glutamine-hydrolyzing) activity"/>
    <property type="evidence" value="ECO:0007669"/>
    <property type="project" value="UniProtKB-UniRule"/>
</dbReference>
<dbReference type="GO" id="GO:0070681">
    <property type="term" value="P:glutaminyl-tRNAGln biosynthesis via transamidation"/>
    <property type="evidence" value="ECO:0007669"/>
    <property type="project" value="TreeGrafter"/>
</dbReference>
<dbReference type="GO" id="GO:0006450">
    <property type="term" value="P:regulation of translational fidelity"/>
    <property type="evidence" value="ECO:0007669"/>
    <property type="project" value="InterPro"/>
</dbReference>
<dbReference type="GO" id="GO:0006412">
    <property type="term" value="P:translation"/>
    <property type="evidence" value="ECO:0007669"/>
    <property type="project" value="UniProtKB-UniRule"/>
</dbReference>
<dbReference type="Gene3D" id="1.10.20.60">
    <property type="entry name" value="Glu-tRNAGln amidotransferase C subunit, N-terminal domain"/>
    <property type="match status" value="1"/>
</dbReference>
<dbReference type="HAMAP" id="MF_00122">
    <property type="entry name" value="GatC"/>
    <property type="match status" value="1"/>
</dbReference>
<dbReference type="InterPro" id="IPR036113">
    <property type="entry name" value="Asp/Glu-ADT_sf_sub_c"/>
</dbReference>
<dbReference type="InterPro" id="IPR003837">
    <property type="entry name" value="GatC"/>
</dbReference>
<dbReference type="NCBIfam" id="TIGR00135">
    <property type="entry name" value="gatC"/>
    <property type="match status" value="1"/>
</dbReference>
<dbReference type="PANTHER" id="PTHR15004">
    <property type="entry name" value="GLUTAMYL-TRNA(GLN) AMIDOTRANSFERASE SUBUNIT C, MITOCHONDRIAL"/>
    <property type="match status" value="1"/>
</dbReference>
<dbReference type="PANTHER" id="PTHR15004:SF0">
    <property type="entry name" value="GLUTAMYL-TRNA(GLN) AMIDOTRANSFERASE SUBUNIT C, MITOCHONDRIAL"/>
    <property type="match status" value="1"/>
</dbReference>
<dbReference type="Pfam" id="PF02686">
    <property type="entry name" value="GatC"/>
    <property type="match status" value="1"/>
</dbReference>
<dbReference type="SUPFAM" id="SSF141000">
    <property type="entry name" value="Glu-tRNAGln amidotransferase C subunit"/>
    <property type="match status" value="1"/>
</dbReference>
<gene>
    <name evidence="1" type="primary">gatC</name>
    <name type="ordered locus">SE_1586</name>
</gene>